<dbReference type="EMBL" id="EF444549">
    <property type="protein sequence ID" value="ABQ09289.1"/>
    <property type="molecule type" value="Genomic_DNA"/>
</dbReference>
<dbReference type="EMBL" id="EF444550">
    <property type="protein sequence ID" value="ABQ09296.1"/>
    <property type="molecule type" value="Genomic_DNA"/>
</dbReference>
<dbReference type="EMBL" id="EF444551">
    <property type="protein sequence ID" value="ABQ09301.1"/>
    <property type="molecule type" value="Genomic_DNA"/>
</dbReference>
<dbReference type="EMBL" id="EF444552">
    <property type="protein sequence ID" value="ABQ09306.1"/>
    <property type="molecule type" value="Genomic_DNA"/>
</dbReference>
<dbReference type="EMBL" id="EF444553">
    <property type="protein sequence ID" value="ABQ09311.1"/>
    <property type="molecule type" value="Genomic_DNA"/>
</dbReference>
<dbReference type="EMBL" id="EF444554">
    <property type="protein sequence ID" value="ABQ09316.1"/>
    <property type="molecule type" value="Genomic_DNA"/>
</dbReference>
<dbReference type="RefSeq" id="YP_001285487.1">
    <molecule id="A5HBD5-1"/>
    <property type="nucleotide sequence ID" value="NC_009539.1"/>
</dbReference>
<dbReference type="PDB" id="3S7X">
    <property type="method" value="X-ray"/>
    <property type="resolution" value="2.90 A"/>
    <property type="chains" value="A/B/C/D/E=34-296"/>
</dbReference>
<dbReference type="PDBsum" id="3S7X"/>
<dbReference type="SMR" id="A5HBD5"/>
<dbReference type="UniLectin" id="A5HBD5"/>
<dbReference type="GeneID" id="5309723"/>
<dbReference type="KEGG" id="vg:5309723"/>
<dbReference type="OrthoDB" id="12524at10239"/>
<dbReference type="EvolutionaryTrace" id="A5HBD5"/>
<dbReference type="Proteomes" id="UP000096057">
    <property type="component" value="Genome"/>
</dbReference>
<dbReference type="Proteomes" id="UP000114161">
    <property type="component" value="Genome"/>
</dbReference>
<dbReference type="Proteomes" id="UP000118542">
    <property type="component" value="Genome"/>
</dbReference>
<dbReference type="Proteomes" id="UP000119623">
    <property type="component" value="Genome"/>
</dbReference>
<dbReference type="Proteomes" id="UP000148617">
    <property type="component" value="Genome"/>
</dbReference>
<dbReference type="Proteomes" id="UP000153939">
    <property type="component" value="Segment"/>
</dbReference>
<dbReference type="GO" id="GO:0042025">
    <property type="term" value="C:host cell nucleus"/>
    <property type="evidence" value="ECO:0007669"/>
    <property type="project" value="UniProtKB-SubCell"/>
</dbReference>
<dbReference type="GO" id="GO:0039620">
    <property type="term" value="C:T=7 icosahedral viral capsid"/>
    <property type="evidence" value="ECO:0007669"/>
    <property type="project" value="UniProtKB-KW"/>
</dbReference>
<dbReference type="GO" id="GO:0005198">
    <property type="term" value="F:structural molecule activity"/>
    <property type="evidence" value="ECO:0007669"/>
    <property type="project" value="InterPro"/>
</dbReference>
<dbReference type="GO" id="GO:0075509">
    <property type="term" value="P:endocytosis involved in viral entry into host cell"/>
    <property type="evidence" value="ECO:0007669"/>
    <property type="project" value="UniProtKB-KW"/>
</dbReference>
<dbReference type="GO" id="GO:0019062">
    <property type="term" value="P:virion attachment to host cell"/>
    <property type="evidence" value="ECO:0007669"/>
    <property type="project" value="UniProtKB-KW"/>
</dbReference>
<dbReference type="Gene3D" id="2.60.175.10">
    <property type="entry name" value="Capsid protein VP1,Polyomavirus"/>
    <property type="match status" value="1"/>
</dbReference>
<dbReference type="InterPro" id="IPR000662">
    <property type="entry name" value="Capsid_VP1_Polyomavir"/>
</dbReference>
<dbReference type="InterPro" id="IPR011222">
    <property type="entry name" value="dsDNA_vir_gr_I_capsid"/>
</dbReference>
<dbReference type="InterPro" id="IPR036931">
    <property type="entry name" value="Polyomavir_VP1_sf"/>
</dbReference>
<dbReference type="Pfam" id="PF00718">
    <property type="entry name" value="Polyoma_coat"/>
    <property type="match status" value="1"/>
</dbReference>
<dbReference type="SUPFAM" id="SSF88648">
    <property type="entry name" value="Group I dsDNA viruses"/>
    <property type="match status" value="1"/>
</dbReference>
<keyword id="KW-0002">3D-structure</keyword>
<keyword id="KW-0024">Alternative initiation</keyword>
<keyword id="KW-0025">Alternative splicing</keyword>
<keyword id="KW-0167">Capsid protein</keyword>
<keyword id="KW-1015">Disulfide bond</keyword>
<keyword id="KW-1048">Host nucleus</keyword>
<keyword id="KW-0945">Host-virus interaction</keyword>
<keyword id="KW-0426">Late protein</keyword>
<keyword id="KW-1185">Reference proteome</keyword>
<keyword id="KW-1145">T=7 icosahedral capsid protein</keyword>
<keyword id="KW-1161">Viral attachment to host cell</keyword>
<keyword id="KW-1162">Viral penetration into host cytoplasm</keyword>
<keyword id="KW-0946">Virion</keyword>
<keyword id="KW-1164">Virus endocytosis by host</keyword>
<keyword id="KW-1160">Virus entry into host cell</keyword>
<accession>A5HBD5</accession>
<name>VP1_POVWU</name>
<proteinExistence type="evidence at protein level"/>
<organismHost>
    <name type="scientific">Homo sapiens</name>
    <name type="common">Human</name>
    <dbReference type="NCBI Taxonomy" id="9606"/>
</organismHost>
<organism>
    <name type="scientific">WU polyomavirus</name>
    <name type="common">WUPyV</name>
    <dbReference type="NCBI Taxonomy" id="440266"/>
    <lineage>
        <taxon>Viruses</taxon>
        <taxon>Monodnaviria</taxon>
        <taxon>Shotokuvirae</taxon>
        <taxon>Cossaviricota</taxon>
        <taxon>Papovaviricetes</taxon>
        <taxon>Sepolyvirales</taxon>
        <taxon>Polyomaviridae</taxon>
        <taxon>Betapolyomavirus</taxon>
        <taxon>Betapolyomavirus quartihominis</taxon>
    </lineage>
</organism>
<feature type="chain" id="PRO_0000295816" description="Major capsid protein VP1">
    <location>
        <begin position="1"/>
        <end position="369"/>
    </location>
</feature>
<feature type="region of interest" description="Disordered" evidence="2">
    <location>
        <begin position="1"/>
        <end position="28"/>
    </location>
</feature>
<feature type="compositionally biased region" description="Polar residues" evidence="2">
    <location>
        <begin position="17"/>
        <end position="28"/>
    </location>
</feature>
<feature type="strand" evidence="5">
    <location>
        <begin position="37"/>
        <end position="41"/>
    </location>
</feature>
<feature type="turn" evidence="5">
    <location>
        <begin position="46"/>
        <end position="48"/>
    </location>
</feature>
<feature type="strand" evidence="5">
    <location>
        <begin position="50"/>
        <end position="56"/>
    </location>
</feature>
<feature type="helix" evidence="5">
    <location>
        <begin position="80"/>
        <end position="83"/>
    </location>
</feature>
<feature type="helix" evidence="5">
    <location>
        <begin position="89"/>
        <end position="91"/>
    </location>
</feature>
<feature type="strand" evidence="5">
    <location>
        <begin position="92"/>
        <end position="94"/>
    </location>
</feature>
<feature type="strand" evidence="5">
    <location>
        <begin position="96"/>
        <end position="100"/>
    </location>
</feature>
<feature type="strand" evidence="5">
    <location>
        <begin position="113"/>
        <end position="127"/>
    </location>
</feature>
<feature type="helix" evidence="5">
    <location>
        <begin position="133"/>
        <end position="135"/>
    </location>
</feature>
<feature type="strand" evidence="5">
    <location>
        <begin position="140"/>
        <end position="142"/>
    </location>
</feature>
<feature type="strand" evidence="5">
    <location>
        <begin position="145"/>
        <end position="147"/>
    </location>
</feature>
<feature type="strand" evidence="5">
    <location>
        <begin position="149"/>
        <end position="158"/>
    </location>
</feature>
<feature type="strand" evidence="5">
    <location>
        <begin position="161"/>
        <end position="164"/>
    </location>
</feature>
<feature type="strand" evidence="5">
    <location>
        <begin position="167"/>
        <end position="170"/>
    </location>
</feature>
<feature type="strand" evidence="5">
    <location>
        <begin position="175"/>
        <end position="178"/>
    </location>
</feature>
<feature type="strand" evidence="5">
    <location>
        <begin position="181"/>
        <end position="185"/>
    </location>
</feature>
<feature type="turn" evidence="5">
    <location>
        <begin position="193"/>
        <end position="195"/>
    </location>
</feature>
<feature type="strand" evidence="5">
    <location>
        <begin position="198"/>
        <end position="200"/>
    </location>
</feature>
<feature type="turn" evidence="5">
    <location>
        <begin position="208"/>
        <end position="210"/>
    </location>
</feature>
<feature type="strand" evidence="5">
    <location>
        <begin position="211"/>
        <end position="213"/>
    </location>
</feature>
<feature type="turn" evidence="5">
    <location>
        <begin position="215"/>
        <end position="217"/>
    </location>
</feature>
<feature type="strand" evidence="5">
    <location>
        <begin position="221"/>
        <end position="228"/>
    </location>
</feature>
<feature type="strand" evidence="5">
    <location>
        <begin position="236"/>
        <end position="242"/>
    </location>
</feature>
<feature type="strand" evidence="5">
    <location>
        <begin position="262"/>
        <end position="275"/>
    </location>
</feature>
<feature type="strand" evidence="5">
    <location>
        <begin position="277"/>
        <end position="279"/>
    </location>
</feature>
<feature type="strand" evidence="5">
    <location>
        <begin position="281"/>
        <end position="295"/>
    </location>
</feature>
<evidence type="ECO:0000250" key="1">
    <source>
        <dbReference type="UniProtKB" id="P03087"/>
    </source>
</evidence>
<evidence type="ECO:0000256" key="2">
    <source>
        <dbReference type="SAM" id="MobiDB-lite"/>
    </source>
</evidence>
<evidence type="ECO:0000305" key="3"/>
<evidence type="ECO:0000305" key="4">
    <source>
    </source>
</evidence>
<evidence type="ECO:0007829" key="5">
    <source>
        <dbReference type="PDB" id="3S7X"/>
    </source>
</evidence>
<sequence>MACTAKPACTAKPGRSPRSQPTRVQSLPKQVRKGGVDVLAAVPLSEETEFKVELFVKPVIGNAEGTTPHYWSISSPLKTAEAANVTPDADTTVCYSLSQVAPPDIPNQVSECDMLIWELYRMETEVLVLPVLNAGILTTGGVGGIAGPQLYFWAVGGQPLDVLGLAPTEKYKGPAQYTVNPKTNGTVPHVYSSSETPRARVTNEKYSIESWVADPSRNDNCRYFGRMVGGAATPPVVSFSNNSTIPLLDENGIGILCLQGRLYITCADLLGVNKNRVHTGLSRFFRLHFRQRRVRNPYTINLLYKQVFNKPADDISGQLQVTEVTMTEETGPLPPTVEGNVGVPTTSNLSHLPATVTLQATGPILNTQG</sequence>
<reference key="1">
    <citation type="journal article" date="2007" name="PLoS Pathog.">
        <title>Identification of a novel polyomavirus from patients with acute respiratory tract infections.</title>
        <authorList>
            <person name="Gaynor A.M."/>
            <person name="Nissen M.D."/>
            <person name="Whiley D.M."/>
            <person name="Mackay I.M."/>
            <person name="Lambert S.B."/>
            <person name="Wu G."/>
            <person name="Brennan D.C."/>
            <person name="Storch G.A."/>
            <person name="Sloots T.P."/>
            <person name="Wang D."/>
        </authorList>
    </citation>
    <scope>NUCLEOTIDE SEQUENCE [GENOMIC DNA]</scope>
    <source>
        <strain>Isolate B0</strain>
        <strain>Isolate S1</strain>
        <strain>Isolate S2</strain>
        <strain>Isolate S3</strain>
        <strain>Isolate S4</strain>
        <strain>Isolate S5</strain>
    </source>
</reference>
<reference key="2">
    <citation type="journal article" date="2009" name="Virology">
        <title>The Polyomaviridae: Contributions of virus structure to our understanding of virus receptors and infectious entry.</title>
        <authorList>
            <person name="Neu U."/>
            <person name="Stehle T."/>
            <person name="Atwood W.J."/>
        </authorList>
    </citation>
    <scope>REVIEW</scope>
</reference>
<protein>
    <recommendedName>
        <fullName>Major capsid protein VP1</fullName>
    </recommendedName>
    <alternativeName>
        <fullName>Major structural protein VP1</fullName>
    </alternativeName>
</protein>
<comment type="function">
    <text evidence="1 4">Forms an icosahedral capsid with a T=7 symmetry and a 40 nm diameter. The capsid is composed of 72 pentamers linked to each other by disulfide bonds and associated with VP2 or VP3 proteins. Interacts with sialic acids on the cell surface to provide virion attachment to target cell. Once attached, the virion is internalized by endocytosis and traffics to the endoplasmic reticulum. Inside the endoplasmic reticulum, the protein folding machinery isomerizes VP1 interpentamer disulfide bonds, thereby triggering initial uncoating. Next, the virion uses the endoplasmic reticulum-associated degradation machinery to probably translocate in the cytosol before reaching the nucleus. Nuclear entry of the viral DNA involves the selective exposure and importin recognition of VP2/Vp3 nuclear localization signal. In late phase of infection, neo-synthesized VP1 encapsulates replicated genomic DNA in the nucleus, and participates in rearranging nucleosomes around the viral DNA.</text>
</comment>
<comment type="subunit">
    <text evidence="1">Homomultimer. The virus capsid is composed of 72 icosahedral units, each one composed of five disulfide-linked copies of VP1. Interacts with minor capsid proteins VP2 and VP3.</text>
</comment>
<comment type="subcellular location">
    <subcellularLocation>
        <location>Virion</location>
    </subcellularLocation>
    <subcellularLocation>
        <location evidence="1">Host nucleus</location>
    </subcellularLocation>
</comment>
<comment type="alternative products">
    <event type="alternative splicing"/>
    <event type="alternative initiation"/>
    <isoform>
        <id>A5HBD5-1</id>
        <name>VP1</name>
        <sequence type="displayed"/>
    </isoform>
    <isoform>
        <id>A5HBE1-1</id>
        <name>VP2</name>
        <name>Minor capsid protein VP2</name>
        <sequence type="external"/>
    </isoform>
    <isoform>
        <id>A5HBE1-2</id>
        <name>VP3</name>
        <name>Minor capsid protein VP3</name>
        <sequence type="external"/>
    </isoform>
</comment>
<comment type="miscellaneous">
    <molecule>Isoform VP1</molecule>
    <text>Produced by alternative splicing of the late mRNA.</text>
</comment>
<comment type="similarity">
    <text evidence="3">Belongs to the polyomaviruses coat protein VP1 family.</text>
</comment>